<gene>
    <name type="primary">HSP10</name>
    <name type="synonym">CPN10</name>
    <name type="ordered locus">YOR020C</name>
    <name type="ORF">OR26.10</name>
</gene>
<accession>P38910</accession>
<accession>D6W286</accession>
<accession>E9P935</accession>
<proteinExistence type="evidence at protein level"/>
<keyword id="KW-0007">Acetylation</keyword>
<keyword id="KW-0143">Chaperone</keyword>
<keyword id="KW-0903">Direct protein sequencing</keyword>
<keyword id="KW-0496">Mitochondrion</keyword>
<keyword id="KW-0597">Phosphoprotein</keyword>
<keyword id="KW-1185">Reference proteome</keyword>
<reference key="1">
    <citation type="journal article" date="1993" name="FEBS Lett.">
        <title>Cloning and disruption of the gene encoding yeast mitochondrial chaperonin 10, the homolog of E. coli groES.</title>
        <authorList>
            <person name="Rospert S."/>
            <person name="Junne T."/>
            <person name="Glick B.S."/>
            <person name="Schatz G."/>
        </authorList>
    </citation>
    <scope>NUCLEOTIDE SEQUENCE [GENOMIC DNA]</scope>
</reference>
<reference key="2">
    <citation type="journal article" date="1994" name="J. Cell Biol.">
        <title>Role of the chaperonin cofactor Hsp10 in protein folding and sorting in yeast mitochondria.</title>
        <authorList>
            <person name="Hoehfeld J."/>
            <person name="Hartl F.U."/>
        </authorList>
    </citation>
    <scope>NUCLEOTIDE SEQUENCE [GENOMIC DNA]</scope>
</reference>
<reference key="3">
    <citation type="journal article" date="1997" name="Nature">
        <title>The nucleotide sequence of Saccharomyces cerevisiae chromosome XV.</title>
        <authorList>
            <person name="Dujon B."/>
            <person name="Albermann K."/>
            <person name="Aldea M."/>
            <person name="Alexandraki D."/>
            <person name="Ansorge W."/>
            <person name="Arino J."/>
            <person name="Benes V."/>
            <person name="Bohn C."/>
            <person name="Bolotin-Fukuhara M."/>
            <person name="Bordonne R."/>
            <person name="Boyer J."/>
            <person name="Camasses A."/>
            <person name="Casamayor A."/>
            <person name="Casas C."/>
            <person name="Cheret G."/>
            <person name="Cziepluch C."/>
            <person name="Daignan-Fornier B."/>
            <person name="Dang V.-D."/>
            <person name="de Haan M."/>
            <person name="Delius H."/>
            <person name="Durand P."/>
            <person name="Fairhead C."/>
            <person name="Feldmann H."/>
            <person name="Gaillon L."/>
            <person name="Galisson F."/>
            <person name="Gamo F.-J."/>
            <person name="Gancedo C."/>
            <person name="Goffeau A."/>
            <person name="Goulding S.E."/>
            <person name="Grivell L.A."/>
            <person name="Habbig B."/>
            <person name="Hand N.J."/>
            <person name="Hani J."/>
            <person name="Hattenhorst U."/>
            <person name="Hebling U."/>
            <person name="Hernando Y."/>
            <person name="Herrero E."/>
            <person name="Heumann K."/>
            <person name="Hiesel R."/>
            <person name="Hilger F."/>
            <person name="Hofmann B."/>
            <person name="Hollenberg C.P."/>
            <person name="Hughes B."/>
            <person name="Jauniaux J.-C."/>
            <person name="Kalogeropoulos A."/>
            <person name="Katsoulou C."/>
            <person name="Kordes E."/>
            <person name="Lafuente M.J."/>
            <person name="Landt O."/>
            <person name="Louis E.J."/>
            <person name="Maarse A.C."/>
            <person name="Madania A."/>
            <person name="Mannhaupt G."/>
            <person name="Marck C."/>
            <person name="Martin R.P."/>
            <person name="Mewes H.-W."/>
            <person name="Michaux G."/>
            <person name="Paces V."/>
            <person name="Parle-McDermott A.G."/>
            <person name="Pearson B.M."/>
            <person name="Perrin A."/>
            <person name="Pettersson B."/>
            <person name="Poch O."/>
            <person name="Pohl T.M."/>
            <person name="Poirey R."/>
            <person name="Portetelle D."/>
            <person name="Pujol A."/>
            <person name="Purnelle B."/>
            <person name="Ramezani Rad M."/>
            <person name="Rechmann S."/>
            <person name="Schwager C."/>
            <person name="Schweizer M."/>
            <person name="Sor F."/>
            <person name="Sterky F."/>
            <person name="Tarassov I.A."/>
            <person name="Teodoru C."/>
            <person name="Tettelin H."/>
            <person name="Thierry A."/>
            <person name="Tobiasch E."/>
            <person name="Tzermia M."/>
            <person name="Uhlen M."/>
            <person name="Unseld M."/>
            <person name="Valens M."/>
            <person name="Vandenbol M."/>
            <person name="Vetter I."/>
            <person name="Vlcek C."/>
            <person name="Voet M."/>
            <person name="Volckaert G."/>
            <person name="Voss H."/>
            <person name="Wambutt R."/>
            <person name="Wedler H."/>
            <person name="Wiemann S."/>
            <person name="Winsor B."/>
            <person name="Wolfe K.H."/>
            <person name="Zollner A."/>
            <person name="Zumstein E."/>
            <person name="Kleine K."/>
        </authorList>
    </citation>
    <scope>NUCLEOTIDE SEQUENCE [LARGE SCALE GENOMIC DNA]</scope>
    <source>
        <strain>ATCC 204508 / S288c</strain>
    </source>
</reference>
<reference key="4">
    <citation type="journal article" date="2014" name="G3 (Bethesda)">
        <title>The reference genome sequence of Saccharomyces cerevisiae: Then and now.</title>
        <authorList>
            <person name="Engel S.R."/>
            <person name="Dietrich F.S."/>
            <person name="Fisk D.G."/>
            <person name="Binkley G."/>
            <person name="Balakrishnan R."/>
            <person name="Costanzo M.C."/>
            <person name="Dwight S.S."/>
            <person name="Hitz B.C."/>
            <person name="Karra K."/>
            <person name="Nash R.S."/>
            <person name="Weng S."/>
            <person name="Wong E.D."/>
            <person name="Lloyd P."/>
            <person name="Skrzypek M.S."/>
            <person name="Miyasato S.R."/>
            <person name="Simison M."/>
            <person name="Cherry J.M."/>
        </authorList>
    </citation>
    <scope>GENOME REANNOTATION</scope>
    <source>
        <strain>ATCC 204508 / S288c</strain>
    </source>
</reference>
<reference key="5">
    <citation type="journal article" date="2007" name="Genome Res.">
        <title>Approaching a complete repository of sequence-verified protein-encoding clones for Saccharomyces cerevisiae.</title>
        <authorList>
            <person name="Hu Y."/>
            <person name="Rolfs A."/>
            <person name="Bhullar B."/>
            <person name="Murthy T.V.S."/>
            <person name="Zhu C."/>
            <person name="Berger M.F."/>
            <person name="Camargo A.A."/>
            <person name="Kelley F."/>
            <person name="McCarron S."/>
            <person name="Jepson D."/>
            <person name="Richardson A."/>
            <person name="Raphael J."/>
            <person name="Moreira D."/>
            <person name="Taycher E."/>
            <person name="Zuo D."/>
            <person name="Mohr S."/>
            <person name="Kane M.F."/>
            <person name="Williamson J."/>
            <person name="Simpson A.J.G."/>
            <person name="Bulyk M.L."/>
            <person name="Harlow E."/>
            <person name="Marsischky G."/>
            <person name="Kolodner R.D."/>
            <person name="LaBaer J."/>
        </authorList>
    </citation>
    <scope>NUCLEOTIDE SEQUENCE [GENOMIC DNA]</scope>
    <source>
        <strain>ATCC 204508 / S288c</strain>
    </source>
</reference>
<reference key="6">
    <citation type="journal article" date="1993" name="Proc. Natl. Acad. Sci. U.S.A.">
        <title>Identification and functional analysis of chaperonin 10, the groES homolog from yeast mitochondria.</title>
        <authorList>
            <person name="Rospert S."/>
            <person name="Glick B.S."/>
            <person name="Jenoe P."/>
            <person name="Schatz G."/>
            <person name="Todd M.J."/>
            <person name="Lorimer G.H."/>
            <person name="Viitanen P.V."/>
        </authorList>
    </citation>
    <scope>PROTEIN SEQUENCE OF 10-24; 29-35 AND 63-78</scope>
</reference>
<reference key="7">
    <citation type="journal article" date="2003" name="Nature">
        <title>Global analysis of protein expression in yeast.</title>
        <authorList>
            <person name="Ghaemmaghami S."/>
            <person name="Huh W.-K."/>
            <person name="Bower K."/>
            <person name="Howson R.W."/>
            <person name="Belle A."/>
            <person name="Dephoure N."/>
            <person name="O'Shea E.K."/>
            <person name="Weissman J.S."/>
        </authorList>
    </citation>
    <scope>LEVEL OF PROTEIN EXPRESSION [LARGE SCALE ANALYSIS]</scope>
</reference>
<reference key="8">
    <citation type="journal article" date="2008" name="Mol. Cell. Proteomics">
        <title>A multidimensional chromatography technology for in-depth phosphoproteome analysis.</title>
        <authorList>
            <person name="Albuquerque C.P."/>
            <person name="Smolka M.B."/>
            <person name="Payne S.H."/>
            <person name="Bafna V."/>
            <person name="Eng J."/>
            <person name="Zhou H."/>
        </authorList>
    </citation>
    <scope>PHOSPHORYLATION [LARGE SCALE ANALYSIS] AT SER-31</scope>
    <scope>IDENTIFICATION BY MASS SPECTROMETRY [LARGE SCALE ANALYSIS]</scope>
</reference>
<reference key="9">
    <citation type="journal article" date="2012" name="Proc. Natl. Acad. Sci. U.S.A.">
        <title>N-terminal acetylome analyses and functional insights of the N-terminal acetyltransferase NatB.</title>
        <authorList>
            <person name="Van Damme P."/>
            <person name="Lasa M."/>
            <person name="Polevoda B."/>
            <person name="Gazquez C."/>
            <person name="Elosegui-Artola A."/>
            <person name="Kim D.S."/>
            <person name="De Juan-Pardo E."/>
            <person name="Demeyer K."/>
            <person name="Hole K."/>
            <person name="Larrea E."/>
            <person name="Timmerman E."/>
            <person name="Prieto J."/>
            <person name="Arnesen T."/>
            <person name="Sherman F."/>
            <person name="Gevaert K."/>
            <person name="Aldabe R."/>
        </authorList>
    </citation>
    <scope>ACETYLATION [LARGE SCALE ANALYSIS] AT SER-2</scope>
    <scope>CLEAVAGE OF INITIATOR METHIONINE [LARGE SCALE ANALYSIS]</scope>
    <scope>IDENTIFICATION BY MASS SPECTROMETRY [LARGE SCALE ANALYSIS]</scope>
</reference>
<organism>
    <name type="scientific">Saccharomyces cerevisiae (strain ATCC 204508 / S288c)</name>
    <name type="common">Baker's yeast</name>
    <dbReference type="NCBI Taxonomy" id="559292"/>
    <lineage>
        <taxon>Eukaryota</taxon>
        <taxon>Fungi</taxon>
        <taxon>Dikarya</taxon>
        <taxon>Ascomycota</taxon>
        <taxon>Saccharomycotina</taxon>
        <taxon>Saccharomycetes</taxon>
        <taxon>Saccharomycetales</taxon>
        <taxon>Saccharomycetaceae</taxon>
        <taxon>Saccharomyces</taxon>
    </lineage>
</organism>
<comment type="function">
    <text>Eukaryotic CPN10 homolog which is essential for mitochondrial protein biogenesis, together with CPN60. Binds to CPN60 in the presence of Mg-ATP and suppresses the ATPase activity of the latter.</text>
</comment>
<comment type="subunit">
    <text evidence="1">Homohexamer.</text>
</comment>
<comment type="subcellular location">
    <subcellularLocation>
        <location>Mitochondrion matrix</location>
    </subcellularLocation>
</comment>
<comment type="PTM">
    <text>The N-terminus is blocked.</text>
</comment>
<comment type="miscellaneous">
    <text evidence="2">Present with 149 molecules/cell in log phase SD medium.</text>
</comment>
<comment type="similarity">
    <text evidence="3">Belongs to the GroES chaperonin family.</text>
</comment>
<name>CH10_YEAST</name>
<dbReference type="EMBL" id="X76853">
    <property type="protein sequence ID" value="CAA54185.1"/>
    <property type="molecule type" value="Genomic_DNA"/>
</dbReference>
<dbReference type="EMBL" id="X75754">
    <property type="protein sequence ID" value="CAA53382.1"/>
    <property type="molecule type" value="Genomic_DNA"/>
</dbReference>
<dbReference type="EMBL" id="X87331">
    <property type="protein sequence ID" value="CAA60769.1"/>
    <property type="molecule type" value="Genomic_DNA"/>
</dbReference>
<dbReference type="EMBL" id="Z74928">
    <property type="protein sequence ID" value="CAA99210.1"/>
    <property type="molecule type" value="Genomic_DNA"/>
</dbReference>
<dbReference type="EMBL" id="AY693222">
    <property type="protein sequence ID" value="AAT93241.1"/>
    <property type="molecule type" value="Genomic_DNA"/>
</dbReference>
<dbReference type="EMBL" id="BK006948">
    <property type="protein sequence ID" value="DAA10802.1"/>
    <property type="molecule type" value="Genomic_DNA"/>
</dbReference>
<dbReference type="PIR" id="S39463">
    <property type="entry name" value="S39463"/>
</dbReference>
<dbReference type="RefSeq" id="NP_014663.1">
    <property type="nucleotide sequence ID" value="NM_001183439.1"/>
</dbReference>
<dbReference type="SMR" id="P38910"/>
<dbReference type="BioGRID" id="34424">
    <property type="interactions" value="535"/>
</dbReference>
<dbReference type="DIP" id="DIP-1483N"/>
<dbReference type="FunCoup" id="P38910">
    <property type="interactions" value="1037"/>
</dbReference>
<dbReference type="IntAct" id="P38910">
    <property type="interactions" value="26"/>
</dbReference>
<dbReference type="MINT" id="P38910"/>
<dbReference type="STRING" id="4932.YOR020C"/>
<dbReference type="iPTMnet" id="P38910"/>
<dbReference type="PaxDb" id="4932-YOR020C"/>
<dbReference type="PeptideAtlas" id="P38910"/>
<dbReference type="TopDownProteomics" id="P38910"/>
<dbReference type="EnsemblFungi" id="YOR020C_mRNA">
    <property type="protein sequence ID" value="YOR020C"/>
    <property type="gene ID" value="YOR020C"/>
</dbReference>
<dbReference type="GeneID" id="854185"/>
<dbReference type="KEGG" id="sce:YOR020C"/>
<dbReference type="AGR" id="SGD:S000005546"/>
<dbReference type="SGD" id="S000005546">
    <property type="gene designation" value="HSP10"/>
</dbReference>
<dbReference type="VEuPathDB" id="FungiDB:YOR020C"/>
<dbReference type="eggNOG" id="KOG1641">
    <property type="taxonomic scope" value="Eukaryota"/>
</dbReference>
<dbReference type="GeneTree" id="ENSGT00390000006350"/>
<dbReference type="HOGENOM" id="CLU_132825_0_0_1"/>
<dbReference type="InParanoid" id="P38910"/>
<dbReference type="OMA" id="EDFLIMR"/>
<dbReference type="OrthoDB" id="184876at2759"/>
<dbReference type="BioCyc" id="YEAST:G3O-33568-MONOMER"/>
<dbReference type="BioGRID-ORCS" id="854185">
    <property type="hits" value="7 hits in 10 CRISPR screens"/>
</dbReference>
<dbReference type="PRO" id="PR:P38910"/>
<dbReference type="Proteomes" id="UP000002311">
    <property type="component" value="Chromosome XV"/>
</dbReference>
<dbReference type="RNAct" id="P38910">
    <property type="molecule type" value="protein"/>
</dbReference>
<dbReference type="GO" id="GO:0005759">
    <property type="term" value="C:mitochondrial matrix"/>
    <property type="evidence" value="ECO:0000314"/>
    <property type="project" value="SGD"/>
</dbReference>
<dbReference type="GO" id="GO:0005739">
    <property type="term" value="C:mitochondrion"/>
    <property type="evidence" value="ECO:0007005"/>
    <property type="project" value="SGD"/>
</dbReference>
<dbReference type="GO" id="GO:0005524">
    <property type="term" value="F:ATP binding"/>
    <property type="evidence" value="ECO:0007669"/>
    <property type="project" value="InterPro"/>
</dbReference>
<dbReference type="GO" id="GO:0046872">
    <property type="term" value="F:metal ion binding"/>
    <property type="evidence" value="ECO:0000318"/>
    <property type="project" value="GO_Central"/>
</dbReference>
<dbReference type="GO" id="GO:0044183">
    <property type="term" value="F:protein folding chaperone"/>
    <property type="evidence" value="ECO:0007669"/>
    <property type="project" value="InterPro"/>
</dbReference>
<dbReference type="GO" id="GO:0051087">
    <property type="term" value="F:protein-folding chaperone binding"/>
    <property type="evidence" value="ECO:0000353"/>
    <property type="project" value="SGD"/>
</dbReference>
<dbReference type="GO" id="GO:0051082">
    <property type="term" value="F:unfolded protein binding"/>
    <property type="evidence" value="ECO:0000314"/>
    <property type="project" value="SGD"/>
</dbReference>
<dbReference type="GO" id="GO:0051085">
    <property type="term" value="P:chaperone cofactor-dependent protein refolding"/>
    <property type="evidence" value="ECO:0000318"/>
    <property type="project" value="GO_Central"/>
</dbReference>
<dbReference type="GO" id="GO:0051131">
    <property type="term" value="P:chaperone-mediated protein complex assembly"/>
    <property type="evidence" value="ECO:0000315"/>
    <property type="project" value="SGD"/>
</dbReference>
<dbReference type="GO" id="GO:0006457">
    <property type="term" value="P:protein folding"/>
    <property type="evidence" value="ECO:0000314"/>
    <property type="project" value="SGD"/>
</dbReference>
<dbReference type="GO" id="GO:0045041">
    <property type="term" value="P:protein import into mitochondrial intermembrane space"/>
    <property type="evidence" value="ECO:0000315"/>
    <property type="project" value="SGD"/>
</dbReference>
<dbReference type="GO" id="GO:0042026">
    <property type="term" value="P:protein refolding"/>
    <property type="evidence" value="ECO:0000314"/>
    <property type="project" value="SGD"/>
</dbReference>
<dbReference type="CDD" id="cd00320">
    <property type="entry name" value="cpn10"/>
    <property type="match status" value="1"/>
</dbReference>
<dbReference type="FunFam" id="2.30.33.40:FF:000002">
    <property type="entry name" value="10 kDa chaperonin, mitochondrial"/>
    <property type="match status" value="1"/>
</dbReference>
<dbReference type="Gene3D" id="2.30.33.40">
    <property type="entry name" value="GroES chaperonin"/>
    <property type="match status" value="1"/>
</dbReference>
<dbReference type="HAMAP" id="MF_00580">
    <property type="entry name" value="CH10"/>
    <property type="match status" value="1"/>
</dbReference>
<dbReference type="InterPro" id="IPR020818">
    <property type="entry name" value="Chaperonin_GroES"/>
</dbReference>
<dbReference type="InterPro" id="IPR037124">
    <property type="entry name" value="Chaperonin_GroES_sf"/>
</dbReference>
<dbReference type="InterPro" id="IPR018369">
    <property type="entry name" value="Chaprnonin_Cpn10_CS"/>
</dbReference>
<dbReference type="InterPro" id="IPR011032">
    <property type="entry name" value="GroES-like_sf"/>
</dbReference>
<dbReference type="PANTHER" id="PTHR10772">
    <property type="entry name" value="10 KDA HEAT SHOCK PROTEIN"/>
    <property type="match status" value="1"/>
</dbReference>
<dbReference type="PANTHER" id="PTHR10772:SF0">
    <property type="entry name" value="10 KDA HEAT SHOCK PROTEIN, MITOCHONDRIAL"/>
    <property type="match status" value="1"/>
</dbReference>
<dbReference type="Pfam" id="PF00166">
    <property type="entry name" value="Cpn10"/>
    <property type="match status" value="1"/>
</dbReference>
<dbReference type="PRINTS" id="PR00297">
    <property type="entry name" value="CHAPERONIN10"/>
</dbReference>
<dbReference type="SMART" id="SM00883">
    <property type="entry name" value="Cpn10"/>
    <property type="match status" value="1"/>
</dbReference>
<dbReference type="SUPFAM" id="SSF50129">
    <property type="entry name" value="GroES-like"/>
    <property type="match status" value="1"/>
</dbReference>
<dbReference type="PROSITE" id="PS00681">
    <property type="entry name" value="CHAPERONINS_CPN10"/>
    <property type="match status" value="1"/>
</dbReference>
<protein>
    <recommendedName>
        <fullName>10 kDa heat shock protein, mitochondrial</fullName>
        <shortName>HSP10</shortName>
    </recommendedName>
    <alternativeName>
        <fullName>10 kDa chaperonin</fullName>
    </alternativeName>
</protein>
<sequence length="106" mass="11372">MSTLLKSAKSIVPLMDRVLVQRIKAQAKTASGLYLPEKNVEKLNQAEVVAVGPGFTDANGNKVVPQVKVGDQVLIPQFGGSTIKLGNDDEVILFRDAEILAKIAKD</sequence>
<feature type="initiator methionine" description="Removed" evidence="5">
    <location>
        <position position="1"/>
    </location>
</feature>
<feature type="chain" id="PRO_0000174922" description="10 kDa heat shock protein, mitochondrial">
    <location>
        <begin position="2"/>
        <end position="106"/>
    </location>
</feature>
<feature type="modified residue" description="N-acetylserine" evidence="5">
    <location>
        <position position="2"/>
    </location>
</feature>
<feature type="modified residue" description="Phosphoserine" evidence="4">
    <location>
        <position position="31"/>
    </location>
</feature>
<feature type="sequence conflict" description="In Ref. 5; AAT93241." evidence="3" ref="5">
    <original>T</original>
    <variation>S</variation>
    <location>
        <position position="82"/>
    </location>
</feature>
<evidence type="ECO:0000250" key="1"/>
<evidence type="ECO:0000269" key="2">
    <source>
    </source>
</evidence>
<evidence type="ECO:0000305" key="3"/>
<evidence type="ECO:0007744" key="4">
    <source>
    </source>
</evidence>
<evidence type="ECO:0007744" key="5">
    <source>
    </source>
</evidence>